<accession>O24972</accession>
<accession>O24971</accession>
<sequence>MRFSIFFKVVALFMITLFSFGAFAYYFVSSQISHENYQNEMRHYQFVTTINEILNNYSDYRAIEDYLYKIGFRETTIENLEKVLAKRRHQLHHRNIGYAEVFKFSDMVFILLKKDEHFVLYKDLHSVSYRNYFLAITVGLLLILFLFLFVLQSLLPLRELRSQVKPFAQGDKSVSCKSKQKDEIGDLANEFDNCILKINAMNESRVLFLRSIMHELRTPITKGKILSSMLKEELSCKRFSSIFDHLNMLIEQFARIEQLASKNYGSNKEKFLMSDLIDKIEKMLLIDEDKESPIHVSSSNYIIEADFELFSIALKNMVDNAIKYSDDKQVFLDFIGNNLVVSNKSKPLKEDFEKYLQPYFKSSNPSQAHGFGLGMYIIKNALEAMGLNLSYHYSNGRICFTIHDCVFNSFYDLEEDNEELPPPPPKI</sequence>
<keyword id="KW-0418">Kinase</keyword>
<keyword id="KW-0472">Membrane</keyword>
<keyword id="KW-0597">Phosphoprotein</keyword>
<keyword id="KW-1185">Reference proteome</keyword>
<keyword id="KW-0808">Transferase</keyword>
<keyword id="KW-0812">Transmembrane</keyword>
<keyword id="KW-1133">Transmembrane helix</keyword>
<name>ARSS_HELPY</name>
<reference key="1">
    <citation type="journal article" date="1997" name="Nature">
        <title>The complete genome sequence of the gastric pathogen Helicobacter pylori.</title>
        <authorList>
            <person name="Tomb J.-F."/>
            <person name="White O."/>
            <person name="Kerlavage A.R."/>
            <person name="Clayton R.A."/>
            <person name="Sutton G.G."/>
            <person name="Fleischmann R.D."/>
            <person name="Ketchum K.A."/>
            <person name="Klenk H.-P."/>
            <person name="Gill S.R."/>
            <person name="Dougherty B.A."/>
            <person name="Nelson K.E."/>
            <person name="Quackenbush J."/>
            <person name="Zhou L."/>
            <person name="Kirkness E.F."/>
            <person name="Peterson S.N."/>
            <person name="Loftus B.J."/>
            <person name="Richardson D.L."/>
            <person name="Dodson R.J."/>
            <person name="Khalak H.G."/>
            <person name="Glodek A."/>
            <person name="McKenney K."/>
            <person name="FitzGerald L.M."/>
            <person name="Lee N."/>
            <person name="Adams M.D."/>
            <person name="Hickey E.K."/>
            <person name="Berg D.E."/>
            <person name="Gocayne J.D."/>
            <person name="Utterback T.R."/>
            <person name="Peterson J.D."/>
            <person name="Kelley J.M."/>
            <person name="Cotton M.D."/>
            <person name="Weidman J.F."/>
            <person name="Fujii C."/>
            <person name="Bowman C."/>
            <person name="Watthey L."/>
            <person name="Wallin E."/>
            <person name="Hayes W.S."/>
            <person name="Borodovsky M."/>
            <person name="Karp P.D."/>
            <person name="Smith H.O."/>
            <person name="Fraser C.M."/>
            <person name="Venter J.C."/>
        </authorList>
    </citation>
    <scope>NUCLEOTIDE SEQUENCE [LARGE SCALE GENOMIC DNA]</scope>
    <source>
        <strain>ATCC 700392 / 26695</strain>
    </source>
</reference>
<reference key="2">
    <citation type="journal article" date="2000" name="J. Bacteriol.">
        <title>Molecular characterization of two-component systems of Helicobacter pylori.</title>
        <authorList>
            <person name="Beier D."/>
            <person name="Frank R."/>
        </authorList>
    </citation>
    <scope>FUNCTION</scope>
    <scope>CATALYTIC ACTIVITY</scope>
    <scope>AUTOPHOSPHORYLATION</scope>
    <scope>SEQUENCE REVISION</scope>
</reference>
<reference key="3">
    <citation type="journal article" date="2004" name="FEMS Microbiol. Lett.">
        <title>Genetic evidence for histidine kinase HP165 being an acid sensor of Helicobacter pylori.</title>
        <authorList>
            <person name="Pflock M."/>
            <person name="Dietz P."/>
            <person name="Schaer J."/>
            <person name="Beier D."/>
        </authorList>
    </citation>
    <scope>FUNCTION</scope>
    <source>
        <strain>G27</strain>
    </source>
</reference>
<reference key="4">
    <citation type="journal article" date="2006" name="J. Bacteriol.">
        <title>Characterization of the ArsRS regulon of Helicobacter pylori, involved in acid adaptation.</title>
        <authorList>
            <person name="Pflock M."/>
            <person name="Finsterer N."/>
            <person name="Joseph B."/>
            <person name="Mollenkopf H."/>
            <person name="Meyer T.F."/>
            <person name="Beier D."/>
        </authorList>
    </citation>
    <scope>FUNCTION</scope>
</reference>
<reference key="5">
    <citation type="journal article" date="2012" name="J. Bacteriol.">
        <title>Role of the Helicobacter pylori sensor kinase ArsS in protein trafficking and acid acclimation.</title>
        <authorList>
            <person name="Marcus E.A."/>
            <person name="Sachs G."/>
            <person name="Wen Y."/>
            <person name="Feng J."/>
            <person name="Scott D.R."/>
        </authorList>
    </citation>
    <scope>FUNCTION</scope>
    <scope>DISRUPTION PHENOTYPE</scope>
</reference>
<reference key="6">
    <citation type="journal article" date="2016" name="Helicobacter">
        <title>Phosphorylation-dependent and Phosphorylation-independent Regulation of Helicobacter pylori Acid Acclimation by the ArsRS Two-component System.</title>
        <authorList>
            <person name="Marcus E.A."/>
            <person name="Sachs G."/>
            <person name="Wen Y."/>
            <person name="Scott D.R."/>
        </authorList>
    </citation>
    <scope>FUNCTION</scope>
</reference>
<reference key="7">
    <citation type="journal article" date="2016" name="J. Bacteriol.">
        <title>Characterization of Key Helicobacter pylori Regulators Identifies a Role for ArsRS in Biofilm Formation.</title>
        <authorList>
            <person name="Servetas S.L."/>
            <person name="Carpenter B.M."/>
            <person name="Haley K.P."/>
            <person name="Gilbreath J.J."/>
            <person name="Gaddy J.A."/>
            <person name="Merrell D.S."/>
        </authorList>
    </citation>
    <scope>FUNCTION IN BIOFILM FORMATION</scope>
    <scope>DISRUPTION PHENOTYPE</scope>
</reference>
<gene>
    <name evidence="10" type="primary">arsS</name>
    <name type="ordered locus">HP_0164/HP_0165</name>
</gene>
<organism>
    <name type="scientific">Helicobacter pylori (strain ATCC 700392 / 26695)</name>
    <name type="common">Campylobacter pylori</name>
    <dbReference type="NCBI Taxonomy" id="85962"/>
    <lineage>
        <taxon>Bacteria</taxon>
        <taxon>Pseudomonadati</taxon>
        <taxon>Campylobacterota</taxon>
        <taxon>Epsilonproteobacteria</taxon>
        <taxon>Campylobacterales</taxon>
        <taxon>Helicobacteraceae</taxon>
        <taxon>Helicobacter</taxon>
    </lineage>
</organism>
<feature type="chain" id="PRO_0000448746" description="Sensor histidine kinase ArsS">
    <location>
        <begin position="1"/>
        <end position="427"/>
    </location>
</feature>
<feature type="transmembrane region" description="Helical" evidence="1">
    <location>
        <begin position="3"/>
        <end position="23"/>
    </location>
</feature>
<feature type="transmembrane region" description="Helical" evidence="1">
    <location>
        <begin position="131"/>
        <end position="151"/>
    </location>
</feature>
<feature type="domain" description="HAMP" evidence="2">
    <location>
        <begin position="151"/>
        <end position="203"/>
    </location>
</feature>
<feature type="domain" description="Histidine kinase" evidence="3">
    <location>
        <begin position="211"/>
        <end position="398"/>
    </location>
</feature>
<feature type="modified residue" description="Phosphohistidine; by autocatalysis" evidence="3">
    <location>
        <position position="214"/>
    </location>
</feature>
<comment type="function">
    <text evidence="4 5 6 7 8 9">Member of the two-component regulatory system ArsS/ArsR that regulates genes involved in biofilm formation and acid adaptation by acting on major ammonia-producing pathways (PubMed:16672598, PubMed:22865848, PubMed:27432830). Functions as a sensor protein kinase which is autophosphorylated at a histidine residue and transfers its phosphate group to the conserved aspartic acid residue in the regulatory domain of ArsR (PubMed:10735847). In turn, ArsR binds to the upstream promoter regions of target genes including ureA, amiE and amiF to positively regulate their expression in response to acidic pH (PubMed:15109719, PubMed:16672598). Also participates in acidic acclimatation in a phosphorylation-independent pathway by regulating acid-induced trafficking of urease and its accessory proteins to the inner membrane (PubMed:25997502).</text>
</comment>
<comment type="catalytic activity">
    <reaction evidence="4">
        <text>ATP + protein L-histidine = ADP + protein N-phospho-L-histidine.</text>
        <dbReference type="EC" id="2.7.13.3"/>
    </reaction>
</comment>
<comment type="subcellular location">
    <subcellularLocation>
        <location evidence="1">Membrane</location>
        <topology evidence="1">Multi-pass membrane protein</topology>
    </subcellularLocation>
</comment>
<comment type="PTM">
    <text evidence="4">Autophosphorylated.</text>
</comment>
<comment type="disruption phenotype">
    <text evidence="7 9">Deletion leads to a decreased urease activity to one-third of the level of the wild type (PubMed:22865848). Displays also an exacerbated stress response that results in enhanced and accelerated biofilm formation (PubMed:27432830).</text>
</comment>
<comment type="sequence caution" evidence="11">
    <conflict type="frameshift">
        <sequence resource="EMBL-CDS" id="AAD07233"/>
    </conflict>
    <text>The gene was originally annotated as two separate ORFs HP_0165 (AC O24972) and HP_0164 (AC O24971) probably due to a sequencing error.</text>
</comment>
<comment type="sequence caution" evidence="11">
    <conflict type="frameshift">
        <sequence resource="EMBL-CDS" id="AAD07239"/>
    </conflict>
</comment>
<dbReference type="EC" id="2.7.13.3" evidence="4"/>
<dbReference type="EMBL" id="AE000511">
    <property type="protein sequence ID" value="AAD07239.1"/>
    <property type="status" value="ALT_FRAME"/>
    <property type="molecule type" value="Genomic_DNA"/>
</dbReference>
<dbReference type="EMBL" id="AE000511">
    <property type="protein sequence ID" value="AAD07233.1"/>
    <property type="status" value="ALT_FRAME"/>
    <property type="molecule type" value="Genomic_DNA"/>
</dbReference>
<dbReference type="PIR" id="D64540">
    <property type="entry name" value="D64540"/>
</dbReference>
<dbReference type="PIR" id="E64540">
    <property type="entry name" value="E64540"/>
</dbReference>
<dbReference type="SMR" id="O24972"/>
<dbReference type="FunCoup" id="O24972">
    <property type="interactions" value="129"/>
</dbReference>
<dbReference type="IntAct" id="O24972">
    <property type="interactions" value="5"/>
</dbReference>
<dbReference type="STRING" id="85962.HP_0164"/>
<dbReference type="PaxDb" id="85962-C694_00815"/>
<dbReference type="EnsemblBacteria" id="AAD07233">
    <property type="protein sequence ID" value="AAD07233"/>
    <property type="gene ID" value="HP_0164"/>
</dbReference>
<dbReference type="EnsemblBacteria" id="AAD07239">
    <property type="protein sequence ID" value="AAD07239"/>
    <property type="gene ID" value="HP_0165"/>
</dbReference>
<dbReference type="KEGG" id="hpy:HP_0164"/>
<dbReference type="KEGG" id="hpy:HP_0165"/>
<dbReference type="PATRIC" id="fig|85962.47.peg.177"/>
<dbReference type="eggNOG" id="COG0642">
    <property type="taxonomic scope" value="Bacteria"/>
</dbReference>
<dbReference type="InParanoid" id="O24972"/>
<dbReference type="Proteomes" id="UP000000429">
    <property type="component" value="Chromosome"/>
</dbReference>
<dbReference type="GO" id="GO:0016020">
    <property type="term" value="C:membrane"/>
    <property type="evidence" value="ECO:0007669"/>
    <property type="project" value="UniProtKB-SubCell"/>
</dbReference>
<dbReference type="GO" id="GO:0000155">
    <property type="term" value="F:phosphorelay sensor kinase activity"/>
    <property type="evidence" value="ECO:0007669"/>
    <property type="project" value="InterPro"/>
</dbReference>
<dbReference type="CDD" id="cd06225">
    <property type="entry name" value="HAMP"/>
    <property type="match status" value="1"/>
</dbReference>
<dbReference type="CDD" id="cd00082">
    <property type="entry name" value="HisKA"/>
    <property type="match status" value="1"/>
</dbReference>
<dbReference type="Gene3D" id="1.10.287.130">
    <property type="match status" value="1"/>
</dbReference>
<dbReference type="Gene3D" id="6.10.340.10">
    <property type="match status" value="1"/>
</dbReference>
<dbReference type="Gene3D" id="3.30.565.10">
    <property type="entry name" value="Histidine kinase-like ATPase, C-terminal domain"/>
    <property type="match status" value="1"/>
</dbReference>
<dbReference type="InterPro" id="IPR047994">
    <property type="entry name" value="ArsS-like"/>
</dbReference>
<dbReference type="InterPro" id="IPR050398">
    <property type="entry name" value="Bact_Sensor_His_Kinase"/>
</dbReference>
<dbReference type="InterPro" id="IPR003660">
    <property type="entry name" value="HAMP_dom"/>
</dbReference>
<dbReference type="InterPro" id="IPR036890">
    <property type="entry name" value="HATPase_C_sf"/>
</dbReference>
<dbReference type="InterPro" id="IPR005467">
    <property type="entry name" value="His_kinase_dom"/>
</dbReference>
<dbReference type="InterPro" id="IPR003661">
    <property type="entry name" value="HisK_dim/P_dom"/>
</dbReference>
<dbReference type="InterPro" id="IPR036097">
    <property type="entry name" value="HisK_dim/P_sf"/>
</dbReference>
<dbReference type="NCBIfam" id="NF038389">
    <property type="entry name" value="ArsS_fam_HK"/>
    <property type="match status" value="1"/>
</dbReference>
<dbReference type="PANTHER" id="PTHR45528:SF12">
    <property type="entry name" value="SENSOR HISTIDINE KINASE ARSS"/>
    <property type="match status" value="1"/>
</dbReference>
<dbReference type="PANTHER" id="PTHR45528">
    <property type="entry name" value="SENSOR HISTIDINE KINASE CPXA"/>
    <property type="match status" value="1"/>
</dbReference>
<dbReference type="Pfam" id="PF02518">
    <property type="entry name" value="HATPase_c"/>
    <property type="match status" value="1"/>
</dbReference>
<dbReference type="SMART" id="SM00304">
    <property type="entry name" value="HAMP"/>
    <property type="match status" value="1"/>
</dbReference>
<dbReference type="SMART" id="SM00387">
    <property type="entry name" value="HATPase_c"/>
    <property type="match status" value="1"/>
</dbReference>
<dbReference type="SMART" id="SM00388">
    <property type="entry name" value="HisKA"/>
    <property type="match status" value="1"/>
</dbReference>
<dbReference type="SUPFAM" id="SSF55874">
    <property type="entry name" value="ATPase domain of HSP90 chaperone/DNA topoisomerase II/histidine kinase"/>
    <property type="match status" value="1"/>
</dbReference>
<dbReference type="SUPFAM" id="SSF158472">
    <property type="entry name" value="HAMP domain-like"/>
    <property type="match status" value="1"/>
</dbReference>
<dbReference type="SUPFAM" id="SSF47384">
    <property type="entry name" value="Homodimeric domain of signal transducing histidine kinase"/>
    <property type="match status" value="1"/>
</dbReference>
<dbReference type="PROSITE" id="PS50885">
    <property type="entry name" value="HAMP"/>
    <property type="match status" value="1"/>
</dbReference>
<dbReference type="PROSITE" id="PS50109">
    <property type="entry name" value="HIS_KIN"/>
    <property type="match status" value="1"/>
</dbReference>
<protein>
    <recommendedName>
        <fullName evidence="10">Sensor histidine kinase ArsS</fullName>
        <ecNumber evidence="4">2.7.13.3</ecNumber>
    </recommendedName>
</protein>
<evidence type="ECO:0000255" key="1"/>
<evidence type="ECO:0000255" key="2">
    <source>
        <dbReference type="PROSITE-ProRule" id="PRU00102"/>
    </source>
</evidence>
<evidence type="ECO:0000255" key="3">
    <source>
        <dbReference type="PROSITE-ProRule" id="PRU00107"/>
    </source>
</evidence>
<evidence type="ECO:0000269" key="4">
    <source>
    </source>
</evidence>
<evidence type="ECO:0000269" key="5">
    <source>
    </source>
</evidence>
<evidence type="ECO:0000269" key="6">
    <source>
    </source>
</evidence>
<evidence type="ECO:0000269" key="7">
    <source>
    </source>
</evidence>
<evidence type="ECO:0000269" key="8">
    <source>
    </source>
</evidence>
<evidence type="ECO:0000269" key="9">
    <source>
    </source>
</evidence>
<evidence type="ECO:0000303" key="10">
    <source>
    </source>
</evidence>
<evidence type="ECO:0000305" key="11">
    <source>
    </source>
</evidence>
<proteinExistence type="evidence at protein level"/>